<name>RSMH_STRZJ</name>
<accession>C1CCA8</accession>
<gene>
    <name evidence="1" type="primary">rsmH</name>
    <name type="synonym">mraW</name>
    <name type="ordered locus">SPJ_0327</name>
</gene>
<comment type="function">
    <text evidence="1">Specifically methylates the N4 position of cytidine in position 1402 (C1402) of 16S rRNA.</text>
</comment>
<comment type="catalytic activity">
    <reaction evidence="1">
        <text>cytidine(1402) in 16S rRNA + S-adenosyl-L-methionine = N(4)-methylcytidine(1402) in 16S rRNA + S-adenosyl-L-homocysteine + H(+)</text>
        <dbReference type="Rhea" id="RHEA:42928"/>
        <dbReference type="Rhea" id="RHEA-COMP:10286"/>
        <dbReference type="Rhea" id="RHEA-COMP:10287"/>
        <dbReference type="ChEBI" id="CHEBI:15378"/>
        <dbReference type="ChEBI" id="CHEBI:57856"/>
        <dbReference type="ChEBI" id="CHEBI:59789"/>
        <dbReference type="ChEBI" id="CHEBI:74506"/>
        <dbReference type="ChEBI" id="CHEBI:82748"/>
        <dbReference type="EC" id="2.1.1.199"/>
    </reaction>
</comment>
<comment type="subcellular location">
    <subcellularLocation>
        <location evidence="1">Cytoplasm</location>
    </subcellularLocation>
</comment>
<comment type="similarity">
    <text evidence="1">Belongs to the methyltransferase superfamily. RsmH family.</text>
</comment>
<keyword id="KW-0963">Cytoplasm</keyword>
<keyword id="KW-0489">Methyltransferase</keyword>
<keyword id="KW-0698">rRNA processing</keyword>
<keyword id="KW-0949">S-adenosyl-L-methionine</keyword>
<keyword id="KW-0808">Transferase</keyword>
<evidence type="ECO:0000255" key="1">
    <source>
        <dbReference type="HAMAP-Rule" id="MF_01007"/>
    </source>
</evidence>
<sequence length="316" mass="36065">MTKEFHHVTVLLHETIDMLDVKPEGIYVDATLGGAGHSEYLLSKLSEKGHLYAFDQDQNAIDNAQKRLAPYIEKGMVTFIKDNFRHLQARLREAGVQEIDGICYDLGVSSPQLDQRERGFSYKKDAPLDMRMNQDASLTAYEVVNHYDYHDLVRIFFKYGEDKFSKQIARKIEQAREVKPIETTTELAEIIKLVKPAKELKKKGHPAKQIFQAIRIEVNDELGAADESIQQAMDMLALDGRISVITFHSLEDRLTKQLFKEASTVEVPKGLPFIPDDLKPKMELVSRKPILPSAEELEANNRSHSAKLRVVRKIHK</sequence>
<feature type="chain" id="PRO_0000387153" description="Ribosomal RNA small subunit methyltransferase H">
    <location>
        <begin position="1"/>
        <end position="316"/>
    </location>
</feature>
<feature type="binding site" evidence="1">
    <location>
        <begin position="35"/>
        <end position="37"/>
    </location>
    <ligand>
        <name>S-adenosyl-L-methionine</name>
        <dbReference type="ChEBI" id="CHEBI:59789"/>
    </ligand>
</feature>
<feature type="binding site" evidence="1">
    <location>
        <position position="55"/>
    </location>
    <ligand>
        <name>S-adenosyl-L-methionine</name>
        <dbReference type="ChEBI" id="CHEBI:59789"/>
    </ligand>
</feature>
<feature type="binding site" evidence="1">
    <location>
        <position position="84"/>
    </location>
    <ligand>
        <name>S-adenosyl-L-methionine</name>
        <dbReference type="ChEBI" id="CHEBI:59789"/>
    </ligand>
</feature>
<feature type="binding site" evidence="1">
    <location>
        <position position="105"/>
    </location>
    <ligand>
        <name>S-adenosyl-L-methionine</name>
        <dbReference type="ChEBI" id="CHEBI:59789"/>
    </ligand>
</feature>
<feature type="binding site" evidence="1">
    <location>
        <position position="112"/>
    </location>
    <ligand>
        <name>S-adenosyl-L-methionine</name>
        <dbReference type="ChEBI" id="CHEBI:59789"/>
    </ligand>
</feature>
<dbReference type="EC" id="2.1.1.199" evidence="1"/>
<dbReference type="EMBL" id="CP000919">
    <property type="protein sequence ID" value="ACO20054.1"/>
    <property type="molecule type" value="Genomic_DNA"/>
</dbReference>
<dbReference type="RefSeq" id="WP_000159434.1">
    <property type="nucleotide sequence ID" value="NC_012466.1"/>
</dbReference>
<dbReference type="SMR" id="C1CCA8"/>
<dbReference type="KEGG" id="sjj:SPJ_0327"/>
<dbReference type="HOGENOM" id="CLU_038422_2_0_9"/>
<dbReference type="Proteomes" id="UP000002206">
    <property type="component" value="Chromosome"/>
</dbReference>
<dbReference type="GO" id="GO:0005737">
    <property type="term" value="C:cytoplasm"/>
    <property type="evidence" value="ECO:0007669"/>
    <property type="project" value="UniProtKB-SubCell"/>
</dbReference>
<dbReference type="GO" id="GO:0071424">
    <property type="term" value="F:rRNA (cytosine-N4-)-methyltransferase activity"/>
    <property type="evidence" value="ECO:0007669"/>
    <property type="project" value="UniProtKB-UniRule"/>
</dbReference>
<dbReference type="GO" id="GO:0070475">
    <property type="term" value="P:rRNA base methylation"/>
    <property type="evidence" value="ECO:0007669"/>
    <property type="project" value="UniProtKB-UniRule"/>
</dbReference>
<dbReference type="FunFam" id="1.10.150.170:FF:000001">
    <property type="entry name" value="Ribosomal RNA small subunit methyltransferase H"/>
    <property type="match status" value="1"/>
</dbReference>
<dbReference type="Gene3D" id="1.10.150.170">
    <property type="entry name" value="Putative methyltransferase TM0872, insert domain"/>
    <property type="match status" value="1"/>
</dbReference>
<dbReference type="Gene3D" id="3.40.50.150">
    <property type="entry name" value="Vaccinia Virus protein VP39"/>
    <property type="match status" value="1"/>
</dbReference>
<dbReference type="HAMAP" id="MF_01007">
    <property type="entry name" value="16SrRNA_methyltr_H"/>
    <property type="match status" value="1"/>
</dbReference>
<dbReference type="InterPro" id="IPR002903">
    <property type="entry name" value="RsmH"/>
</dbReference>
<dbReference type="InterPro" id="IPR023397">
    <property type="entry name" value="SAM-dep_MeTrfase_MraW_recog"/>
</dbReference>
<dbReference type="InterPro" id="IPR029063">
    <property type="entry name" value="SAM-dependent_MTases_sf"/>
</dbReference>
<dbReference type="NCBIfam" id="TIGR00006">
    <property type="entry name" value="16S rRNA (cytosine(1402)-N(4))-methyltransferase RsmH"/>
    <property type="match status" value="1"/>
</dbReference>
<dbReference type="PANTHER" id="PTHR11265:SF0">
    <property type="entry name" value="12S RRNA N4-METHYLCYTIDINE METHYLTRANSFERASE"/>
    <property type="match status" value="1"/>
</dbReference>
<dbReference type="PANTHER" id="PTHR11265">
    <property type="entry name" value="S-ADENOSYL-METHYLTRANSFERASE MRAW"/>
    <property type="match status" value="1"/>
</dbReference>
<dbReference type="Pfam" id="PF01795">
    <property type="entry name" value="Methyltransf_5"/>
    <property type="match status" value="1"/>
</dbReference>
<dbReference type="PIRSF" id="PIRSF004486">
    <property type="entry name" value="MraW"/>
    <property type="match status" value="1"/>
</dbReference>
<dbReference type="SUPFAM" id="SSF81799">
    <property type="entry name" value="Putative methyltransferase TM0872, insert domain"/>
    <property type="match status" value="1"/>
</dbReference>
<dbReference type="SUPFAM" id="SSF53335">
    <property type="entry name" value="S-adenosyl-L-methionine-dependent methyltransferases"/>
    <property type="match status" value="1"/>
</dbReference>
<proteinExistence type="inferred from homology"/>
<protein>
    <recommendedName>
        <fullName evidence="1">Ribosomal RNA small subunit methyltransferase H</fullName>
        <ecNumber evidence="1">2.1.1.199</ecNumber>
    </recommendedName>
    <alternativeName>
        <fullName evidence="1">16S rRNA m(4)C1402 methyltransferase</fullName>
    </alternativeName>
    <alternativeName>
        <fullName evidence="1">rRNA (cytosine-N(4)-)-methyltransferase RsmH</fullName>
    </alternativeName>
</protein>
<organism>
    <name type="scientific">Streptococcus pneumoniae (strain JJA)</name>
    <dbReference type="NCBI Taxonomy" id="488222"/>
    <lineage>
        <taxon>Bacteria</taxon>
        <taxon>Bacillati</taxon>
        <taxon>Bacillota</taxon>
        <taxon>Bacilli</taxon>
        <taxon>Lactobacillales</taxon>
        <taxon>Streptococcaceae</taxon>
        <taxon>Streptococcus</taxon>
    </lineage>
</organism>
<reference key="1">
    <citation type="journal article" date="2010" name="Genome Biol.">
        <title>Structure and dynamics of the pan-genome of Streptococcus pneumoniae and closely related species.</title>
        <authorList>
            <person name="Donati C."/>
            <person name="Hiller N.L."/>
            <person name="Tettelin H."/>
            <person name="Muzzi A."/>
            <person name="Croucher N.J."/>
            <person name="Angiuoli S.V."/>
            <person name="Oggioni M."/>
            <person name="Dunning Hotopp J.C."/>
            <person name="Hu F.Z."/>
            <person name="Riley D.R."/>
            <person name="Covacci A."/>
            <person name="Mitchell T.J."/>
            <person name="Bentley S.D."/>
            <person name="Kilian M."/>
            <person name="Ehrlich G.D."/>
            <person name="Rappuoli R."/>
            <person name="Moxon E.R."/>
            <person name="Masignani V."/>
        </authorList>
    </citation>
    <scope>NUCLEOTIDE SEQUENCE [LARGE SCALE GENOMIC DNA]</scope>
    <source>
        <strain>JJA</strain>
    </source>
</reference>